<comment type="function">
    <text evidence="1">Redox regulated molecular chaperone. Protects both thermally unfolding and oxidatively damaged proteins from irreversible aggregation. Plays an important role in the bacterial defense system toward oxidative stress.</text>
</comment>
<comment type="subcellular location">
    <subcellularLocation>
        <location evidence="1">Cytoplasm</location>
    </subcellularLocation>
</comment>
<comment type="PTM">
    <text evidence="1">Under oxidizing conditions two disulfide bonds are formed involving the reactive cysteines. Under reducing conditions zinc is bound to the reactive cysteines and the protein is inactive.</text>
</comment>
<comment type="similarity">
    <text evidence="1">Belongs to the HSP33 family.</text>
</comment>
<dbReference type="EMBL" id="CP000382">
    <property type="protein sequence ID" value="ABK61659.1"/>
    <property type="molecule type" value="Genomic_DNA"/>
</dbReference>
<dbReference type="RefSeq" id="WP_011721834.1">
    <property type="nucleotide sequence ID" value="NC_008593.1"/>
</dbReference>
<dbReference type="SMR" id="A0PZM7"/>
<dbReference type="STRING" id="386415.NT01CX_1750"/>
<dbReference type="KEGG" id="cno:NT01CX_1750"/>
<dbReference type="eggNOG" id="COG1281">
    <property type="taxonomic scope" value="Bacteria"/>
</dbReference>
<dbReference type="HOGENOM" id="CLU_054493_1_0_9"/>
<dbReference type="Proteomes" id="UP000008220">
    <property type="component" value="Chromosome"/>
</dbReference>
<dbReference type="GO" id="GO:0005737">
    <property type="term" value="C:cytoplasm"/>
    <property type="evidence" value="ECO:0007669"/>
    <property type="project" value="UniProtKB-SubCell"/>
</dbReference>
<dbReference type="GO" id="GO:0044183">
    <property type="term" value="F:protein folding chaperone"/>
    <property type="evidence" value="ECO:0007669"/>
    <property type="project" value="TreeGrafter"/>
</dbReference>
<dbReference type="GO" id="GO:0051082">
    <property type="term" value="F:unfolded protein binding"/>
    <property type="evidence" value="ECO:0007669"/>
    <property type="project" value="UniProtKB-UniRule"/>
</dbReference>
<dbReference type="GO" id="GO:0042026">
    <property type="term" value="P:protein refolding"/>
    <property type="evidence" value="ECO:0007669"/>
    <property type="project" value="TreeGrafter"/>
</dbReference>
<dbReference type="CDD" id="cd00498">
    <property type="entry name" value="Hsp33"/>
    <property type="match status" value="1"/>
</dbReference>
<dbReference type="Gene3D" id="3.55.30.10">
    <property type="entry name" value="Hsp33 domain"/>
    <property type="match status" value="1"/>
</dbReference>
<dbReference type="Gene3D" id="3.90.1280.10">
    <property type="entry name" value="HSP33 redox switch-like"/>
    <property type="match status" value="1"/>
</dbReference>
<dbReference type="HAMAP" id="MF_00117">
    <property type="entry name" value="HslO"/>
    <property type="match status" value="1"/>
</dbReference>
<dbReference type="InterPro" id="IPR000397">
    <property type="entry name" value="Heat_shock_Hsp33"/>
</dbReference>
<dbReference type="InterPro" id="IPR016154">
    <property type="entry name" value="Heat_shock_Hsp33_C"/>
</dbReference>
<dbReference type="InterPro" id="IPR016153">
    <property type="entry name" value="Heat_shock_Hsp33_N"/>
</dbReference>
<dbReference type="NCBIfam" id="NF001033">
    <property type="entry name" value="PRK00114.1"/>
    <property type="match status" value="1"/>
</dbReference>
<dbReference type="PANTHER" id="PTHR30111">
    <property type="entry name" value="33 KDA CHAPERONIN"/>
    <property type="match status" value="1"/>
</dbReference>
<dbReference type="PANTHER" id="PTHR30111:SF1">
    <property type="entry name" value="33 KDA CHAPERONIN"/>
    <property type="match status" value="1"/>
</dbReference>
<dbReference type="Pfam" id="PF01430">
    <property type="entry name" value="HSP33"/>
    <property type="match status" value="1"/>
</dbReference>
<dbReference type="PIRSF" id="PIRSF005261">
    <property type="entry name" value="Heat_shock_Hsp33"/>
    <property type="match status" value="1"/>
</dbReference>
<dbReference type="SUPFAM" id="SSF64397">
    <property type="entry name" value="Hsp33 domain"/>
    <property type="match status" value="1"/>
</dbReference>
<dbReference type="SUPFAM" id="SSF118352">
    <property type="entry name" value="HSP33 redox switch-like"/>
    <property type="match status" value="1"/>
</dbReference>
<sequence length="294" mass="31831">MSDRLIKAVAKDGQVRIIVADTRELVNKGIKIHNCAPTAAAALGRMLTAGVIMGSMLKSDKDVITLKIDGGGEAKGVTVTSYANANVKGYIGNPSVDLEANALGKLDVGGAIGKNGSLLVIRDFGLKEPYVGNVPIYTGEVGDDIAYYFTVSEQTPTAVGLGVLVDKDLSIRKAGGVIIQMMPGADEMLADLITYRLQDLGSITSFLDSGKTIDDMLNFLFDDMDLKILEEMTPEYSCDCSREKIERALISIGEKDLKEIYNDGKTEEIVCQFCGEHYKFTNEEIGELLKNVRK</sequence>
<feature type="chain" id="PRO_1000015537" description="33 kDa chaperonin">
    <location>
        <begin position="1"/>
        <end position="294"/>
    </location>
</feature>
<feature type="disulfide bond" description="Redox-active" evidence="1">
    <location>
        <begin position="238"/>
        <end position="240"/>
    </location>
</feature>
<feature type="disulfide bond" description="Redox-active" evidence="1">
    <location>
        <begin position="271"/>
        <end position="274"/>
    </location>
</feature>
<protein>
    <recommendedName>
        <fullName evidence="1">33 kDa chaperonin</fullName>
    </recommendedName>
    <alternativeName>
        <fullName evidence="1">Heat shock protein 33 homolog</fullName>
        <shortName evidence="1">HSP33</shortName>
    </alternativeName>
</protein>
<accession>A0PZM7</accession>
<proteinExistence type="inferred from homology"/>
<keyword id="KW-0143">Chaperone</keyword>
<keyword id="KW-0963">Cytoplasm</keyword>
<keyword id="KW-1015">Disulfide bond</keyword>
<keyword id="KW-0676">Redox-active center</keyword>
<keyword id="KW-1185">Reference proteome</keyword>
<keyword id="KW-0862">Zinc</keyword>
<name>HSLO_CLONN</name>
<evidence type="ECO:0000255" key="1">
    <source>
        <dbReference type="HAMAP-Rule" id="MF_00117"/>
    </source>
</evidence>
<organism>
    <name type="scientific">Clostridium novyi (strain NT)</name>
    <dbReference type="NCBI Taxonomy" id="386415"/>
    <lineage>
        <taxon>Bacteria</taxon>
        <taxon>Bacillati</taxon>
        <taxon>Bacillota</taxon>
        <taxon>Clostridia</taxon>
        <taxon>Eubacteriales</taxon>
        <taxon>Clostridiaceae</taxon>
        <taxon>Clostridium</taxon>
    </lineage>
</organism>
<reference key="1">
    <citation type="journal article" date="2006" name="Nat. Biotechnol.">
        <title>The genome and transcriptomes of the anti-tumor agent Clostridium novyi-NT.</title>
        <authorList>
            <person name="Bettegowda C."/>
            <person name="Huang X."/>
            <person name="Lin J."/>
            <person name="Cheong I."/>
            <person name="Kohli M."/>
            <person name="Szabo S.A."/>
            <person name="Zhang X."/>
            <person name="Diaz L.A. Jr."/>
            <person name="Velculescu V.E."/>
            <person name="Parmigiani G."/>
            <person name="Kinzler K.W."/>
            <person name="Vogelstein B."/>
            <person name="Zhou S."/>
        </authorList>
    </citation>
    <scope>NUCLEOTIDE SEQUENCE [LARGE SCALE GENOMIC DNA]</scope>
    <source>
        <strain>NT</strain>
    </source>
</reference>
<gene>
    <name evidence="1" type="primary">hslO</name>
    <name type="ordered locus">NT01CX_1750</name>
</gene>